<feature type="chain" id="PRO_0000199538" description="Endogenous retrovirus group K member 19 Pro protein">
    <location>
        <begin position="1"/>
        <end position="156"/>
    </location>
</feature>
<feature type="domain" description="Peptidase A2" evidence="3">
    <location>
        <begin position="21"/>
        <end position="96"/>
    </location>
</feature>
<feature type="domain" description="G-patch" evidence="2">
    <location>
        <begin position="111"/>
        <end position="156"/>
    </location>
</feature>
<feature type="active site" evidence="4">
    <location>
        <position position="26"/>
    </location>
</feature>
<feature type="sequence conflict" description="In Ref. 2." evidence="5" ref="2">
    <original>L</original>
    <variation>P</variation>
    <location>
        <position position="126"/>
    </location>
</feature>
<sequence length="156" mass="17107">WASQVSENRPVCKAIIQGKQFEGLVDTGADVSIIALNQWPKNWPKQKAVTGLVGIGTASEVYQSTEILHCLGPDNQESTVQPMITSIPLNLWGRDLLQQWGAEITMPAPLYSPTSQKIMTKMGYILGKGLGKNEDGIKIPVEAKINQKREGIGYPF</sequence>
<protein>
    <recommendedName>
        <fullName>Endogenous retrovirus group K member 19 Pro protein</fullName>
    </recommendedName>
    <alternativeName>
        <fullName>HERV-K(C19) Pro protein</fullName>
    </alternativeName>
    <alternativeName>
        <fullName>HERV-K_19q12 provirus ancestral Pro protein</fullName>
        <ecNumber>3.4.23.50</ecNumber>
    </alternativeName>
    <alternativeName>
        <fullName>Protease</fullName>
    </alternativeName>
    <alternativeName>
        <fullName>Proteinase</fullName>
        <shortName>PR</shortName>
    </alternativeName>
</protein>
<reference key="1">
    <citation type="journal article" date="1999" name="J. Virol.">
        <title>Genome wide screening, cloning, chromosomal assignment and expression of full-length human endogenous retrovirus type K (HERV-K).</title>
        <authorList>
            <person name="Toenjes R.R."/>
            <person name="Czauderna F."/>
            <person name="Kurth R."/>
        </authorList>
    </citation>
    <scope>NUCLEOTIDE SEQUENCE [GENOMIC DNA]</scope>
</reference>
<reference key="2">
    <citation type="journal article" date="2004" name="Nature">
        <title>The DNA sequence and biology of human chromosome 19.</title>
        <authorList>
            <person name="Grimwood J."/>
            <person name="Gordon L.A."/>
            <person name="Olsen A.S."/>
            <person name="Terry A."/>
            <person name="Schmutz J."/>
            <person name="Lamerdin J.E."/>
            <person name="Hellsten U."/>
            <person name="Goodstein D."/>
            <person name="Couronne O."/>
            <person name="Tran-Gyamfi M."/>
            <person name="Aerts A."/>
            <person name="Altherr M."/>
            <person name="Ashworth L."/>
            <person name="Bajorek E."/>
            <person name="Black S."/>
            <person name="Branscomb E."/>
            <person name="Caenepeel S."/>
            <person name="Carrano A.V."/>
            <person name="Caoile C."/>
            <person name="Chan Y.M."/>
            <person name="Christensen M."/>
            <person name="Cleland C.A."/>
            <person name="Copeland A."/>
            <person name="Dalin E."/>
            <person name="Dehal P."/>
            <person name="Denys M."/>
            <person name="Detter J.C."/>
            <person name="Escobar J."/>
            <person name="Flowers D."/>
            <person name="Fotopulos D."/>
            <person name="Garcia C."/>
            <person name="Georgescu A.M."/>
            <person name="Glavina T."/>
            <person name="Gomez M."/>
            <person name="Gonzales E."/>
            <person name="Groza M."/>
            <person name="Hammon N."/>
            <person name="Hawkins T."/>
            <person name="Haydu L."/>
            <person name="Ho I."/>
            <person name="Huang W."/>
            <person name="Israni S."/>
            <person name="Jett J."/>
            <person name="Kadner K."/>
            <person name="Kimball H."/>
            <person name="Kobayashi A."/>
            <person name="Larionov V."/>
            <person name="Leem S.-H."/>
            <person name="Lopez F."/>
            <person name="Lou Y."/>
            <person name="Lowry S."/>
            <person name="Malfatti S."/>
            <person name="Martinez D."/>
            <person name="McCready P.M."/>
            <person name="Medina C."/>
            <person name="Morgan J."/>
            <person name="Nelson K."/>
            <person name="Nolan M."/>
            <person name="Ovcharenko I."/>
            <person name="Pitluck S."/>
            <person name="Pollard M."/>
            <person name="Popkie A.P."/>
            <person name="Predki P."/>
            <person name="Quan G."/>
            <person name="Ramirez L."/>
            <person name="Rash S."/>
            <person name="Retterer J."/>
            <person name="Rodriguez A."/>
            <person name="Rogers S."/>
            <person name="Salamov A."/>
            <person name="Salazar A."/>
            <person name="She X."/>
            <person name="Smith D."/>
            <person name="Slezak T."/>
            <person name="Solovyev V."/>
            <person name="Thayer N."/>
            <person name="Tice H."/>
            <person name="Tsai M."/>
            <person name="Ustaszewska A."/>
            <person name="Vo N."/>
            <person name="Wagner M."/>
            <person name="Wheeler J."/>
            <person name="Wu K."/>
            <person name="Xie G."/>
            <person name="Yang J."/>
            <person name="Dubchak I."/>
            <person name="Furey T.S."/>
            <person name="DeJong P."/>
            <person name="Dickson M."/>
            <person name="Gordon D."/>
            <person name="Eichler E.E."/>
            <person name="Pennacchio L.A."/>
            <person name="Richardson P."/>
            <person name="Stubbs L."/>
            <person name="Rokhsar D.S."/>
            <person name="Myers R.M."/>
            <person name="Rubin E.M."/>
            <person name="Lucas S.M."/>
        </authorList>
    </citation>
    <scope>NUCLEOTIDE SEQUENCE [LARGE SCALE GENOMIC DNA]</scope>
</reference>
<dbReference type="EC" id="3.4.23.50"/>
<dbReference type="EMBL" id="Y17833">
    <property type="status" value="NOT_ANNOTATED_CDS"/>
    <property type="molecule type" value="Genomic_DNA"/>
</dbReference>
<dbReference type="EMBL" id="AC112702">
    <property type="status" value="NOT_ANNOTATED_CDS"/>
    <property type="molecule type" value="Genomic_DNA"/>
</dbReference>
<dbReference type="SMR" id="P63120"/>
<dbReference type="iPTMnet" id="P63120"/>
<dbReference type="PhosphoSitePlus" id="P63120"/>
<dbReference type="BioMuta" id="HGNC:39026"/>
<dbReference type="GeneCards" id="ERVK-19"/>
<dbReference type="HGNC" id="HGNC:39026">
    <property type="gene designation" value="ERVK-19"/>
</dbReference>
<dbReference type="neXtProt" id="NX_P63120"/>
<dbReference type="PhylomeDB" id="P63120"/>
<dbReference type="Pharos" id="P63120">
    <property type="development level" value="Tdark"/>
</dbReference>
<dbReference type="Proteomes" id="UP000005640">
    <property type="component" value="Unplaced"/>
</dbReference>
<dbReference type="GO" id="GO:0004190">
    <property type="term" value="F:aspartic-type endopeptidase activity"/>
    <property type="evidence" value="ECO:0007669"/>
    <property type="project" value="UniProtKB-KW"/>
</dbReference>
<dbReference type="GO" id="GO:0003676">
    <property type="term" value="F:nucleic acid binding"/>
    <property type="evidence" value="ECO:0007669"/>
    <property type="project" value="InterPro"/>
</dbReference>
<dbReference type="GO" id="GO:0006508">
    <property type="term" value="P:proteolysis"/>
    <property type="evidence" value="ECO:0007669"/>
    <property type="project" value="UniProtKB-KW"/>
</dbReference>
<dbReference type="GO" id="GO:0075523">
    <property type="term" value="P:viral translational frameshifting"/>
    <property type="evidence" value="ECO:0007669"/>
    <property type="project" value="UniProtKB-KW"/>
</dbReference>
<dbReference type="CDD" id="cd05482">
    <property type="entry name" value="HIV_retropepsin_like"/>
    <property type="match status" value="1"/>
</dbReference>
<dbReference type="Gene3D" id="2.40.70.10">
    <property type="entry name" value="Acid Proteases"/>
    <property type="match status" value="1"/>
</dbReference>
<dbReference type="InterPro" id="IPR001969">
    <property type="entry name" value="Aspartic_peptidase_AS"/>
</dbReference>
<dbReference type="InterPro" id="IPR000467">
    <property type="entry name" value="G_patch_dom"/>
</dbReference>
<dbReference type="InterPro" id="IPR051592">
    <property type="entry name" value="HERV-K_Pro_peptidase_A2"/>
</dbReference>
<dbReference type="InterPro" id="IPR001995">
    <property type="entry name" value="Peptidase_A2_cat"/>
</dbReference>
<dbReference type="InterPro" id="IPR021109">
    <property type="entry name" value="Peptidase_aspartic_dom_sf"/>
</dbReference>
<dbReference type="InterPro" id="IPR034170">
    <property type="entry name" value="Retropepsin-like_cat_dom"/>
</dbReference>
<dbReference type="InterPro" id="IPR018061">
    <property type="entry name" value="Retropepsins"/>
</dbReference>
<dbReference type="PANTHER" id="PTHR19422">
    <property type="entry name" value="GAG RETROVIRAL POLYPROTEIN"/>
    <property type="match status" value="1"/>
</dbReference>
<dbReference type="PANTHER" id="PTHR19422:SF123">
    <property type="entry name" value="RT1 CLASS I, LOCUS CE15"/>
    <property type="match status" value="1"/>
</dbReference>
<dbReference type="Pfam" id="PF01585">
    <property type="entry name" value="G-patch"/>
    <property type="match status" value="1"/>
</dbReference>
<dbReference type="Pfam" id="PF00077">
    <property type="entry name" value="RVP"/>
    <property type="match status" value="1"/>
</dbReference>
<dbReference type="SMART" id="SM00443">
    <property type="entry name" value="G_patch"/>
    <property type="match status" value="1"/>
</dbReference>
<dbReference type="SUPFAM" id="SSF50630">
    <property type="entry name" value="Acid proteases"/>
    <property type="match status" value="1"/>
</dbReference>
<dbReference type="PROSITE" id="PS50175">
    <property type="entry name" value="ASP_PROT_RETROV"/>
    <property type="match status" value="1"/>
</dbReference>
<dbReference type="PROSITE" id="PS00141">
    <property type="entry name" value="ASP_PROTEASE"/>
    <property type="match status" value="1"/>
</dbReference>
<dbReference type="PROSITE" id="PS50174">
    <property type="entry name" value="G_PATCH"/>
    <property type="match status" value="1"/>
</dbReference>
<accession>P63120</accession>
<evidence type="ECO:0000250" key="1"/>
<evidence type="ECO:0000255" key="2">
    <source>
        <dbReference type="PROSITE-ProRule" id="PRU00092"/>
    </source>
</evidence>
<evidence type="ECO:0000255" key="3">
    <source>
        <dbReference type="PROSITE-ProRule" id="PRU00275"/>
    </source>
</evidence>
<evidence type="ECO:0000255" key="4">
    <source>
        <dbReference type="PROSITE-ProRule" id="PRU10094"/>
    </source>
</evidence>
<evidence type="ECO:0000305" key="5"/>
<organism>
    <name type="scientific">Homo sapiens</name>
    <name type="common">Human</name>
    <dbReference type="NCBI Taxonomy" id="9606"/>
    <lineage>
        <taxon>Eukaryota</taxon>
        <taxon>Metazoa</taxon>
        <taxon>Chordata</taxon>
        <taxon>Craniata</taxon>
        <taxon>Vertebrata</taxon>
        <taxon>Euteleostomi</taxon>
        <taxon>Mammalia</taxon>
        <taxon>Eutheria</taxon>
        <taxon>Euarchontoglires</taxon>
        <taxon>Primates</taxon>
        <taxon>Haplorrhini</taxon>
        <taxon>Catarrhini</taxon>
        <taxon>Hominidae</taxon>
        <taxon>Homo</taxon>
    </lineage>
</organism>
<proteinExistence type="inferred from homology"/>
<gene>
    <name type="primary">ERVK-19</name>
</gene>
<keyword id="KW-0064">Aspartyl protease</keyword>
<keyword id="KW-0068">Autocatalytic cleavage</keyword>
<keyword id="KW-0895">ERV</keyword>
<keyword id="KW-0378">Hydrolase</keyword>
<keyword id="KW-0645">Protease</keyword>
<keyword id="KW-1185">Reference proteome</keyword>
<keyword id="KW-0688">Ribosomal frameshifting</keyword>
<keyword id="KW-0814">Transposable element</keyword>
<name>VPK19_HUMAN</name>
<comment type="function">
    <text>Retroviral proteases have roles in the processing of the primary translation products and the maturation of the viral particle. Endogenous Pro proteins may have kept, lost or modified their original function during evolution.</text>
</comment>
<comment type="catalytic activity">
    <reaction>
        <text>Processing at the authentic HIV-1 PR recognition site and release of the mature p17 matrix and the p24 capsid protein, as a result of the cleavage of the -SQNY-|-PIVQ- cleavage site.</text>
        <dbReference type="EC" id="3.4.23.50"/>
    </reaction>
</comment>
<comment type="subunit">
    <text evidence="1">Active as a homodimer.</text>
</comment>
<comment type="alternative products">
    <event type="ribosomal frameshifting"/>
    <isoform>
        <id>P63120-1</id>
        <name>1</name>
        <sequence type="displayed"/>
    </isoform>
    <text>This protein is synthesized as Gag-Pro and Gag-Pro-Pol polyprotein. These polyproteins are thought, by similarity with type-B retroviruses, to be generated by -1 frameshifts occurring at the Gag-Pro and Pro-Pol genes boundaries.</text>
</comment>
<comment type="PTM">
    <text evidence="1">Autoproteolytically processed at the N-terminus. Expected C-terminal autoprocessing not detected. The sequence shown is that of the processed Pro protein (By similarity).</text>
</comment>
<comment type="similarity">
    <text evidence="5">Belongs to the peptidase A2 family. HERV class-II K(HML-2) subfamily.</text>
</comment>